<evidence type="ECO:0000250" key="1"/>
<evidence type="ECO:0000250" key="2">
    <source>
        <dbReference type="UniProtKB" id="Q9UBU7"/>
    </source>
</evidence>
<evidence type="ECO:0000255" key="3">
    <source>
        <dbReference type="PROSITE-ProRule" id="PRU00600"/>
    </source>
</evidence>
<evidence type="ECO:0000256" key="4">
    <source>
        <dbReference type="SAM" id="MobiDB-lite"/>
    </source>
</evidence>
<evidence type="ECO:0000269" key="5">
    <source>
    </source>
</evidence>
<evidence type="ECO:0000269" key="6">
    <source>
    </source>
</evidence>
<evidence type="ECO:0000303" key="7">
    <source>
    </source>
</evidence>
<evidence type="ECO:0000303" key="8">
    <source>
    </source>
</evidence>
<evidence type="ECO:0000305" key="9"/>
<organism>
    <name type="scientific">Mus musculus</name>
    <name type="common">Mouse</name>
    <dbReference type="NCBI Taxonomy" id="10090"/>
    <lineage>
        <taxon>Eukaryota</taxon>
        <taxon>Metazoa</taxon>
        <taxon>Chordata</taxon>
        <taxon>Craniata</taxon>
        <taxon>Vertebrata</taxon>
        <taxon>Euteleostomi</taxon>
        <taxon>Mammalia</taxon>
        <taxon>Eutheria</taxon>
        <taxon>Euarchontoglires</taxon>
        <taxon>Glires</taxon>
        <taxon>Rodentia</taxon>
        <taxon>Myomorpha</taxon>
        <taxon>Muroidea</taxon>
        <taxon>Muridae</taxon>
        <taxon>Murinae</taxon>
        <taxon>Mus</taxon>
        <taxon>Mus</taxon>
    </lineage>
</organism>
<protein>
    <recommendedName>
        <fullName>Protein DBF4 homolog A</fullName>
    </recommendedName>
    <alternativeName>
        <fullName>MuDBF4</fullName>
    </alternativeName>
</protein>
<name>DBF4A_MOUSE</name>
<accession>Q9QZ41</accession>
<accession>B7ZNS0</accession>
<accession>Q3TQP4</accession>
<accession>Q3V1K2</accession>
<accession>Q6NSQ1</accession>
<accession>Q9CXF2</accession>
<keyword id="KW-0025">Alternative splicing</keyword>
<keyword id="KW-0131">Cell cycle</keyword>
<keyword id="KW-0235">DNA replication</keyword>
<keyword id="KW-0479">Metal-binding</keyword>
<keyword id="KW-0539">Nucleus</keyword>
<keyword id="KW-0597">Phosphoprotein</keyword>
<keyword id="KW-1185">Reference proteome</keyword>
<keyword id="KW-0677">Repeat</keyword>
<keyword id="KW-0862">Zinc</keyword>
<keyword id="KW-0863">Zinc-finger</keyword>
<feature type="chain" id="PRO_0000234062" description="Protein DBF4 homolog A">
    <location>
        <begin position="1"/>
        <end position="663"/>
    </location>
</feature>
<feature type="domain" description="BRCT 1">
    <location>
        <begin position="40"/>
        <end position="128"/>
    </location>
</feature>
<feature type="domain" description="BRCT 2">
    <location>
        <begin position="154"/>
        <end position="179"/>
    </location>
</feature>
<feature type="zinc finger region" description="DBF4-type" evidence="3">
    <location>
        <begin position="288"/>
        <end position="336"/>
    </location>
</feature>
<feature type="region of interest" description="Disordered" evidence="4">
    <location>
        <begin position="1"/>
        <end position="29"/>
    </location>
</feature>
<feature type="region of interest" description="Disordered" evidence="4">
    <location>
        <begin position="99"/>
        <end position="131"/>
    </location>
</feature>
<feature type="region of interest" description="Disordered" evidence="4">
    <location>
        <begin position="369"/>
        <end position="480"/>
    </location>
</feature>
<feature type="short sequence motif" description="Integrase domain-binding motif 1 (IBM1)" evidence="2">
    <location>
        <begin position="603"/>
        <end position="627"/>
    </location>
</feature>
<feature type="short sequence motif" description="Integrase domain-binding motif 2 (IBM2)" evidence="2">
    <location>
        <begin position="644"/>
        <end position="663"/>
    </location>
</feature>
<feature type="compositionally biased region" description="Basic and acidic residues" evidence="4">
    <location>
        <begin position="20"/>
        <end position="29"/>
    </location>
</feature>
<feature type="compositionally biased region" description="Polar residues" evidence="4">
    <location>
        <begin position="113"/>
        <end position="129"/>
    </location>
</feature>
<feature type="compositionally biased region" description="Basic and acidic residues" evidence="4">
    <location>
        <begin position="400"/>
        <end position="410"/>
    </location>
</feature>
<feature type="compositionally biased region" description="Basic and acidic residues" evidence="4">
    <location>
        <begin position="452"/>
        <end position="469"/>
    </location>
</feature>
<feature type="binding site" evidence="3">
    <location>
        <position position="295"/>
    </location>
    <ligand>
        <name>Zn(2+)</name>
        <dbReference type="ChEBI" id="CHEBI:29105"/>
    </ligand>
</feature>
<feature type="binding site" evidence="3">
    <location>
        <position position="298"/>
    </location>
    <ligand>
        <name>Zn(2+)</name>
        <dbReference type="ChEBI" id="CHEBI:29105"/>
    </ligand>
</feature>
<feature type="binding site" evidence="3">
    <location>
        <position position="308"/>
    </location>
    <ligand>
        <name>Zn(2+)</name>
        <dbReference type="ChEBI" id="CHEBI:29105"/>
    </ligand>
</feature>
<feature type="binding site" evidence="3">
    <location>
        <position position="314"/>
    </location>
    <ligand>
        <name>Zn(2+)</name>
        <dbReference type="ChEBI" id="CHEBI:29105"/>
    </ligand>
</feature>
<feature type="modified residue" description="Phosphoserine" evidence="2">
    <location>
        <position position="311"/>
    </location>
</feature>
<feature type="modified residue" description="Phosphothreonine" evidence="2">
    <location>
        <position position="344"/>
    </location>
</feature>
<feature type="modified residue" description="Phosphoserine" evidence="2">
    <location>
        <position position="353"/>
    </location>
</feature>
<feature type="modified residue" description="Phosphoserine" evidence="2">
    <location>
        <position position="358"/>
    </location>
</feature>
<feature type="modified residue" description="Phosphoserine" evidence="2">
    <location>
        <position position="412"/>
    </location>
</feature>
<feature type="modified residue" description="Phosphoserine" evidence="2">
    <location>
        <position position="614"/>
    </location>
</feature>
<feature type="modified residue" description="Phosphoserine" evidence="2">
    <location>
        <position position="656"/>
    </location>
</feature>
<feature type="modified residue" description="Phosphoserine" evidence="2">
    <location>
        <position position="658"/>
    </location>
</feature>
<feature type="splice variant" id="VSP_018205" description="In isoform 2." evidence="7 8">
    <original>TG</original>
    <variation>R</variation>
    <location>
        <begin position="212"/>
        <end position="213"/>
    </location>
</feature>
<feature type="splice variant" id="VSP_018206" description="In isoform 3." evidence="8">
    <original>HLLSEKHRNFAQSN</original>
    <variation>VNVIFHLGLVFLKI</variation>
    <location>
        <begin position="308"/>
        <end position="321"/>
    </location>
</feature>
<feature type="splice variant" id="VSP_018207" description="In isoform 3." evidence="8">
    <location>
        <begin position="322"/>
        <end position="663"/>
    </location>
</feature>
<sequence length="663" mass="74176">MNLETMRIHSKAPLPGGIQDRNEKNRPSLKSLKADNRLEKSKYKPLWGKIFYLDLPSITICEKLQKDIKELGGRVEEFLSKDISYFVSNKKEAKYAQTLGRVSPVPSPESAYTAETTSPHPSHDGSSFKSQDRVCLSRGKLLAEKAVKDHDFIPANSILSNALSWGVKILHIDDIRYYIEQKKKALSALKKSSASGKDAGKKAGPGIQKTRTGRLKKPFLKVEDVNRCYRPFYLQLPSLPCINYFLQKPCSPFDIEKSSSVQKQAQPKLRINMDGDKCGTPVQLQLKEKRKKGYCECCLQKYEDLETHLLSEKHRNFAQSNQYQVVDDIVSQLVFDFVEYGRDTPQKKRIRYSVGSLSSVSANVLKNTAPKEKPLLEPNFQKDVGESSGHLLKPNSQYEETQKPEEKHGFASEPTTYSSAGLKGCDRKPVSMFNASEPDPEQEYAQLPLRDSTPEHQVTEGRNDGEQRVDPAPGVSQSCGQVSHLSTESNLPQPQLAADITQLSAKDLQEKGFHVVIGHASDLVALNTSKEQLTMKARTPPCSPQEPHECDTENMENLPCGKIQRKVRMLLGQQKANAEPSAELDKKRTEYLPAHEDRTCGSPVQSLLDLFQTSEEKSEFLGFTGYTENSGICDVLDIWEEENSSTLLSTFFSSPSTSAFVGF</sequence>
<gene>
    <name type="primary">Dbf4</name>
    <name type="synonym">Dbf4a</name>
</gene>
<reference key="1">
    <citation type="journal article" date="1999" name="Mol. Gen. Genet.">
        <title>Identification, characterization and chromosomal localization of the cognate human and murine DBF4 genes.</title>
        <authorList>
            <person name="Lepke M."/>
            <person name="Puetter V."/>
            <person name="Staib C."/>
            <person name="Kneissl M."/>
            <person name="Berger C."/>
            <person name="Hoehn K."/>
            <person name="Nanda I."/>
            <person name="Schmid M."/>
            <person name="Grummt F."/>
        </authorList>
    </citation>
    <scope>NUCLEOTIDE SEQUENCE [MRNA] (ISOFORM 1)</scope>
    <scope>FUNCTION</scope>
    <scope>INTERACTION WITH CDC7 AND MCM2</scope>
    <scope>INDUCTION</scope>
    <source>
        <strain>C57BL/6J</strain>
        <tissue>Egg</tissue>
        <tissue>Embryo</tissue>
    </source>
</reference>
<reference key="2">
    <citation type="journal article" date="2005" name="Science">
        <title>The transcriptional landscape of the mammalian genome.</title>
        <authorList>
            <person name="Carninci P."/>
            <person name="Kasukawa T."/>
            <person name="Katayama S."/>
            <person name="Gough J."/>
            <person name="Frith M.C."/>
            <person name="Maeda N."/>
            <person name="Oyama R."/>
            <person name="Ravasi T."/>
            <person name="Lenhard B."/>
            <person name="Wells C."/>
            <person name="Kodzius R."/>
            <person name="Shimokawa K."/>
            <person name="Bajic V.B."/>
            <person name="Brenner S.E."/>
            <person name="Batalov S."/>
            <person name="Forrest A.R."/>
            <person name="Zavolan M."/>
            <person name="Davis M.J."/>
            <person name="Wilming L.G."/>
            <person name="Aidinis V."/>
            <person name="Allen J.E."/>
            <person name="Ambesi-Impiombato A."/>
            <person name="Apweiler R."/>
            <person name="Aturaliya R.N."/>
            <person name="Bailey T.L."/>
            <person name="Bansal M."/>
            <person name="Baxter L."/>
            <person name="Beisel K.W."/>
            <person name="Bersano T."/>
            <person name="Bono H."/>
            <person name="Chalk A.M."/>
            <person name="Chiu K.P."/>
            <person name="Choudhary V."/>
            <person name="Christoffels A."/>
            <person name="Clutterbuck D.R."/>
            <person name="Crowe M.L."/>
            <person name="Dalla E."/>
            <person name="Dalrymple B.P."/>
            <person name="de Bono B."/>
            <person name="Della Gatta G."/>
            <person name="di Bernardo D."/>
            <person name="Down T."/>
            <person name="Engstrom P."/>
            <person name="Fagiolini M."/>
            <person name="Faulkner G."/>
            <person name="Fletcher C.F."/>
            <person name="Fukushima T."/>
            <person name="Furuno M."/>
            <person name="Futaki S."/>
            <person name="Gariboldi M."/>
            <person name="Georgii-Hemming P."/>
            <person name="Gingeras T.R."/>
            <person name="Gojobori T."/>
            <person name="Green R.E."/>
            <person name="Gustincich S."/>
            <person name="Harbers M."/>
            <person name="Hayashi Y."/>
            <person name="Hensch T.K."/>
            <person name="Hirokawa N."/>
            <person name="Hill D."/>
            <person name="Huminiecki L."/>
            <person name="Iacono M."/>
            <person name="Ikeo K."/>
            <person name="Iwama A."/>
            <person name="Ishikawa T."/>
            <person name="Jakt M."/>
            <person name="Kanapin A."/>
            <person name="Katoh M."/>
            <person name="Kawasawa Y."/>
            <person name="Kelso J."/>
            <person name="Kitamura H."/>
            <person name="Kitano H."/>
            <person name="Kollias G."/>
            <person name="Krishnan S.P."/>
            <person name="Kruger A."/>
            <person name="Kummerfeld S.K."/>
            <person name="Kurochkin I.V."/>
            <person name="Lareau L.F."/>
            <person name="Lazarevic D."/>
            <person name="Lipovich L."/>
            <person name="Liu J."/>
            <person name="Liuni S."/>
            <person name="McWilliam S."/>
            <person name="Madan Babu M."/>
            <person name="Madera M."/>
            <person name="Marchionni L."/>
            <person name="Matsuda H."/>
            <person name="Matsuzawa S."/>
            <person name="Miki H."/>
            <person name="Mignone F."/>
            <person name="Miyake S."/>
            <person name="Morris K."/>
            <person name="Mottagui-Tabar S."/>
            <person name="Mulder N."/>
            <person name="Nakano N."/>
            <person name="Nakauchi H."/>
            <person name="Ng P."/>
            <person name="Nilsson R."/>
            <person name="Nishiguchi S."/>
            <person name="Nishikawa S."/>
            <person name="Nori F."/>
            <person name="Ohara O."/>
            <person name="Okazaki Y."/>
            <person name="Orlando V."/>
            <person name="Pang K.C."/>
            <person name="Pavan W.J."/>
            <person name="Pavesi G."/>
            <person name="Pesole G."/>
            <person name="Petrovsky N."/>
            <person name="Piazza S."/>
            <person name="Reed J."/>
            <person name="Reid J.F."/>
            <person name="Ring B.Z."/>
            <person name="Ringwald M."/>
            <person name="Rost B."/>
            <person name="Ruan Y."/>
            <person name="Salzberg S.L."/>
            <person name="Sandelin A."/>
            <person name="Schneider C."/>
            <person name="Schoenbach C."/>
            <person name="Sekiguchi K."/>
            <person name="Semple C.A."/>
            <person name="Seno S."/>
            <person name="Sessa L."/>
            <person name="Sheng Y."/>
            <person name="Shibata Y."/>
            <person name="Shimada H."/>
            <person name="Shimada K."/>
            <person name="Silva D."/>
            <person name="Sinclair B."/>
            <person name="Sperling S."/>
            <person name="Stupka E."/>
            <person name="Sugiura K."/>
            <person name="Sultana R."/>
            <person name="Takenaka Y."/>
            <person name="Taki K."/>
            <person name="Tammoja K."/>
            <person name="Tan S.L."/>
            <person name="Tang S."/>
            <person name="Taylor M.S."/>
            <person name="Tegner J."/>
            <person name="Teichmann S.A."/>
            <person name="Ueda H.R."/>
            <person name="van Nimwegen E."/>
            <person name="Verardo R."/>
            <person name="Wei C.L."/>
            <person name="Yagi K."/>
            <person name="Yamanishi H."/>
            <person name="Zabarovsky E."/>
            <person name="Zhu S."/>
            <person name="Zimmer A."/>
            <person name="Hide W."/>
            <person name="Bult C."/>
            <person name="Grimmond S.M."/>
            <person name="Teasdale R.D."/>
            <person name="Liu E.T."/>
            <person name="Brusic V."/>
            <person name="Quackenbush J."/>
            <person name="Wahlestedt C."/>
            <person name="Mattick J.S."/>
            <person name="Hume D.A."/>
            <person name="Kai C."/>
            <person name="Sasaki D."/>
            <person name="Tomaru Y."/>
            <person name="Fukuda S."/>
            <person name="Kanamori-Katayama M."/>
            <person name="Suzuki M."/>
            <person name="Aoki J."/>
            <person name="Arakawa T."/>
            <person name="Iida J."/>
            <person name="Imamura K."/>
            <person name="Itoh M."/>
            <person name="Kato T."/>
            <person name="Kawaji H."/>
            <person name="Kawagashira N."/>
            <person name="Kawashima T."/>
            <person name="Kojima M."/>
            <person name="Kondo S."/>
            <person name="Konno H."/>
            <person name="Nakano K."/>
            <person name="Ninomiya N."/>
            <person name="Nishio T."/>
            <person name="Okada M."/>
            <person name="Plessy C."/>
            <person name="Shibata K."/>
            <person name="Shiraki T."/>
            <person name="Suzuki S."/>
            <person name="Tagami M."/>
            <person name="Waki K."/>
            <person name="Watahiki A."/>
            <person name="Okamura-Oho Y."/>
            <person name="Suzuki H."/>
            <person name="Kawai J."/>
            <person name="Hayashizaki Y."/>
        </authorList>
    </citation>
    <scope>NUCLEOTIDE SEQUENCE [LARGE SCALE MRNA] (ISOFORMS 2 AND 3)</scope>
    <scope>NUCLEOTIDE SEQUENCE [LARGE SCALE MRNA] OF 75-345</scope>
    <source>
        <strain>C57BL/6J</strain>
        <tissue>Liver</tissue>
    </source>
</reference>
<reference key="3">
    <citation type="journal article" date="2004" name="Genome Res.">
        <title>The status, quality, and expansion of the NIH full-length cDNA project: the Mammalian Gene Collection (MGC).</title>
        <authorList>
            <consortium name="The MGC Project Team"/>
        </authorList>
    </citation>
    <scope>NUCLEOTIDE SEQUENCE [LARGE SCALE MRNA] (ISOFORM 2)</scope>
    <scope>NUCLEOTIDE SEQUENCE [LARGE SCALE MRNA] OF 1-287</scope>
    <source>
        <tissue>Brain</tissue>
        <tissue>Jaw</tissue>
    </source>
</reference>
<reference key="4">
    <citation type="journal article" date="2003" name="J. Mol. Biol.">
        <title>Interaction and assembly of murine pre-replicative complex proteins in yeast and mouse cells.</title>
        <authorList>
            <person name="Kneissl M."/>
            <person name="Puetter V."/>
            <person name="Szalay A.A."/>
            <person name="Grummt F."/>
        </authorList>
    </citation>
    <scope>INTERACTION WITH MCM2; ORC2; ORC4 AND ORC6</scope>
</reference>
<proteinExistence type="evidence at protein level"/>
<dbReference type="EMBL" id="AJ003132">
    <property type="protein sequence ID" value="CAB56847.1"/>
    <property type="molecule type" value="mRNA"/>
</dbReference>
<dbReference type="EMBL" id="AK014480">
    <property type="protein sequence ID" value="BAB29383.1"/>
    <property type="molecule type" value="mRNA"/>
</dbReference>
<dbReference type="EMBL" id="AK132403">
    <property type="protein sequence ID" value="BAE21148.1"/>
    <property type="molecule type" value="mRNA"/>
</dbReference>
<dbReference type="EMBL" id="AK163408">
    <property type="protein sequence ID" value="BAE37338.1"/>
    <property type="molecule type" value="mRNA"/>
</dbReference>
<dbReference type="EMBL" id="BC069983">
    <property type="protein sequence ID" value="AAH69983.1"/>
    <property type="status" value="ALT_SEQ"/>
    <property type="molecule type" value="mRNA"/>
</dbReference>
<dbReference type="EMBL" id="BC145392">
    <property type="protein sequence ID" value="AAI45393.1"/>
    <property type="molecule type" value="mRNA"/>
</dbReference>
<dbReference type="CCDS" id="CCDS19081.1">
    <molecule id="Q9QZ41-1"/>
</dbReference>
<dbReference type="CCDS" id="CCDS57324.1">
    <molecule id="Q9QZ41-2"/>
</dbReference>
<dbReference type="RefSeq" id="NP_001177646.1">
    <molecule id="Q9QZ41-2"/>
    <property type="nucleotide sequence ID" value="NM_001190717.1"/>
</dbReference>
<dbReference type="RefSeq" id="NP_038754.1">
    <molecule id="Q9QZ41-1"/>
    <property type="nucleotide sequence ID" value="NM_013726.3"/>
</dbReference>
<dbReference type="SMR" id="Q9QZ41"/>
<dbReference type="FunCoup" id="Q9QZ41">
    <property type="interactions" value="2703"/>
</dbReference>
<dbReference type="STRING" id="10090.ENSMUSP00000132906"/>
<dbReference type="GlyGen" id="Q9QZ41">
    <property type="glycosylation" value="1 site, 1 N-linked glycan (1 site)"/>
</dbReference>
<dbReference type="iPTMnet" id="Q9QZ41"/>
<dbReference type="PhosphoSitePlus" id="Q9QZ41"/>
<dbReference type="PaxDb" id="10090-ENSMUSP00000132906"/>
<dbReference type="ProteomicsDB" id="277947">
    <molecule id="Q9QZ41-1"/>
</dbReference>
<dbReference type="ProteomicsDB" id="277948">
    <molecule id="Q9QZ41-2"/>
</dbReference>
<dbReference type="ProteomicsDB" id="277949">
    <molecule id="Q9QZ41-3"/>
</dbReference>
<dbReference type="Antibodypedia" id="15373">
    <property type="antibodies" value="241 antibodies from 34 providers"/>
</dbReference>
<dbReference type="DNASU" id="27214"/>
<dbReference type="Ensembl" id="ENSMUST00000002368.16">
    <molecule id="Q9QZ41-2"/>
    <property type="protein sequence ID" value="ENSMUSP00000002368.10"/>
    <property type="gene ID" value="ENSMUSG00000002297.17"/>
</dbReference>
<dbReference type="Ensembl" id="ENSMUST00000171808.8">
    <molecule id="Q9QZ41-1"/>
    <property type="protein sequence ID" value="ENSMUSP00000132906.2"/>
    <property type="gene ID" value="ENSMUSG00000002297.17"/>
</dbReference>
<dbReference type="GeneID" id="27214"/>
<dbReference type="KEGG" id="mmu:27214"/>
<dbReference type="UCSC" id="uc008wkc.2">
    <molecule id="Q9QZ41-1"/>
    <property type="organism name" value="mouse"/>
</dbReference>
<dbReference type="UCSC" id="uc008wkd.2">
    <molecule id="Q9QZ41-2"/>
    <property type="organism name" value="mouse"/>
</dbReference>
<dbReference type="UCSC" id="uc008wke.2">
    <molecule id="Q9QZ41-3"/>
    <property type="organism name" value="mouse"/>
</dbReference>
<dbReference type="AGR" id="MGI:1351328"/>
<dbReference type="CTD" id="10926"/>
<dbReference type="MGI" id="MGI:1351328">
    <property type="gene designation" value="Dbf4"/>
</dbReference>
<dbReference type="VEuPathDB" id="HostDB:ENSMUSG00000002297"/>
<dbReference type="eggNOG" id="KOG4139">
    <property type="taxonomic scope" value="Eukaryota"/>
</dbReference>
<dbReference type="GeneTree" id="ENSGT00530000063909"/>
<dbReference type="HOGENOM" id="CLU_030726_2_0_1"/>
<dbReference type="InParanoid" id="Q9QZ41"/>
<dbReference type="OMA" id="RQNFIHL"/>
<dbReference type="OrthoDB" id="21380at2759"/>
<dbReference type="PhylomeDB" id="Q9QZ41"/>
<dbReference type="TreeFam" id="TF332790"/>
<dbReference type="Reactome" id="R-MMU-176187">
    <property type="pathway name" value="Activation of ATR in response to replication stress"/>
</dbReference>
<dbReference type="Reactome" id="R-MMU-68962">
    <property type="pathway name" value="Activation of the pre-replicative complex"/>
</dbReference>
<dbReference type="BioGRID-ORCS" id="27214">
    <property type="hits" value="13 hits in 80 CRISPR screens"/>
</dbReference>
<dbReference type="ChiTaRS" id="Dbf4">
    <property type="organism name" value="mouse"/>
</dbReference>
<dbReference type="PRO" id="PR:Q9QZ41"/>
<dbReference type="Proteomes" id="UP000000589">
    <property type="component" value="Chromosome 5"/>
</dbReference>
<dbReference type="RNAct" id="Q9QZ41">
    <property type="molecule type" value="protein"/>
</dbReference>
<dbReference type="Bgee" id="ENSMUSG00000002297">
    <property type="expression patterns" value="Expressed in ureteric bud tip and 198 other cell types or tissues"/>
</dbReference>
<dbReference type="ExpressionAtlas" id="Q9QZ41">
    <property type="expression patterns" value="baseline and differential"/>
</dbReference>
<dbReference type="GO" id="GO:0016604">
    <property type="term" value="C:nuclear body"/>
    <property type="evidence" value="ECO:0007669"/>
    <property type="project" value="Ensembl"/>
</dbReference>
<dbReference type="GO" id="GO:0005634">
    <property type="term" value="C:nucleus"/>
    <property type="evidence" value="ECO:0000314"/>
    <property type="project" value="MGI"/>
</dbReference>
<dbReference type="GO" id="GO:0003676">
    <property type="term" value="F:nucleic acid binding"/>
    <property type="evidence" value="ECO:0007669"/>
    <property type="project" value="InterPro"/>
</dbReference>
<dbReference type="GO" id="GO:0004674">
    <property type="term" value="F:protein serine/threonine kinase activity"/>
    <property type="evidence" value="ECO:0000247"/>
    <property type="project" value="MGI"/>
</dbReference>
<dbReference type="GO" id="GO:0008270">
    <property type="term" value="F:zinc ion binding"/>
    <property type="evidence" value="ECO:0007669"/>
    <property type="project" value="UniProtKB-KW"/>
</dbReference>
<dbReference type="GO" id="GO:0006260">
    <property type="term" value="P:DNA replication"/>
    <property type="evidence" value="ECO:0007669"/>
    <property type="project" value="UniProtKB-KW"/>
</dbReference>
<dbReference type="GO" id="GO:0007089">
    <property type="term" value="P:traversing start control point of mitotic cell cycle"/>
    <property type="evidence" value="ECO:0000247"/>
    <property type="project" value="MGI"/>
</dbReference>
<dbReference type="FunFam" id="2.10.50.40:FF:000001">
    <property type="entry name" value="Protein DBF4 homolog A"/>
    <property type="match status" value="1"/>
</dbReference>
<dbReference type="FunFam" id="6.10.250.3410:FF:000001">
    <property type="entry name" value="Protein DBF4 homolog A"/>
    <property type="match status" value="1"/>
</dbReference>
<dbReference type="Gene3D" id="2.10.50.40">
    <property type="match status" value="1"/>
</dbReference>
<dbReference type="Gene3D" id="6.10.250.3410">
    <property type="entry name" value="DBF zinc finger"/>
    <property type="match status" value="1"/>
</dbReference>
<dbReference type="InterPro" id="IPR051590">
    <property type="entry name" value="Replication_Regulatory_Kinase"/>
</dbReference>
<dbReference type="InterPro" id="IPR006572">
    <property type="entry name" value="Znf_DBF"/>
</dbReference>
<dbReference type="InterPro" id="IPR038545">
    <property type="entry name" value="Znf_DBF_sf"/>
</dbReference>
<dbReference type="PANTHER" id="PTHR15375">
    <property type="entry name" value="ACTIVATOR OF S-PHASE KINASE-RELATED"/>
    <property type="match status" value="1"/>
</dbReference>
<dbReference type="PANTHER" id="PTHR15375:SF22">
    <property type="entry name" value="PROTEIN DBF4 HOMOLOG A"/>
    <property type="match status" value="1"/>
</dbReference>
<dbReference type="Pfam" id="PF07535">
    <property type="entry name" value="zf-DBF"/>
    <property type="match status" value="1"/>
</dbReference>
<dbReference type="SMART" id="SM00586">
    <property type="entry name" value="ZnF_DBF"/>
    <property type="match status" value="1"/>
</dbReference>
<dbReference type="PROSITE" id="PS51265">
    <property type="entry name" value="ZF_DBF4"/>
    <property type="match status" value="1"/>
</dbReference>
<comment type="function">
    <text evidence="5">Regulatory subunit for CDC7 which activates its kinase activity thereby playing a central role DNA in replication and cell proliferation. Required for progression of S phase. The complex CDC7-DBF4A selectively phosphorylates MCM2 subunit at 'Ser-40' and 'Ser-53' and then is involved in regulating the initiation of DNA replication during cell cycle.</text>
</comment>
<comment type="subunit">
    <text evidence="2 5 6">Forms a complex with CDC7. Note that CDC7 forms distinct complex either with DBF4A or DBF4B. Such complexes are stable upon replication stress. Interacts with MEN1, MCM2, ORC2, ORC4 and ORC6. Interacts (via IBM motifs) with PSIP1 (via IBD domain); phosphorylation increases its affinity for PSIP1 (By similarity).</text>
</comment>
<comment type="subcellular location">
    <subcellularLocation>
        <location evidence="1">Nucleus</location>
    </subcellularLocation>
</comment>
<comment type="alternative products">
    <event type="alternative splicing"/>
    <isoform>
        <id>Q9QZ41-1</id>
        <name>1</name>
        <sequence type="displayed"/>
    </isoform>
    <isoform>
        <id>Q9QZ41-2</id>
        <name>2</name>
        <sequence type="described" ref="VSP_018205"/>
    </isoform>
    <isoform>
        <id>Q9QZ41-3</id>
        <name>3</name>
        <sequence type="described" ref="VSP_018206 VSP_018207"/>
    </isoform>
</comment>
<comment type="induction">
    <text evidence="5">In a cell cycle-dependent manner. Induced at low level through G1. Increased during S phase and decreased at the end of S phase.</text>
</comment>
<comment type="PTM">
    <text evidence="2">Phosphorylation increases its interaction with PSIP1.</text>
</comment>
<comment type="sequence caution" evidence="9">
    <conflict type="miscellaneous discrepancy">
        <sequence resource="EMBL-CDS" id="AAH69983"/>
    </conflict>
    <text>Contaminating sequence. Potential poly-A sequence.</text>
</comment>